<feature type="chain" id="PRO_0000364225" description="V-type proton ATPase subunit G 3">
    <location>
        <begin position="1"/>
        <end position="118"/>
    </location>
</feature>
<feature type="region of interest" description="Disordered" evidence="3">
    <location>
        <begin position="19"/>
        <end position="39"/>
    </location>
</feature>
<feature type="coiled-coil region" evidence="2">
    <location>
        <begin position="3"/>
        <end position="54"/>
    </location>
</feature>
<comment type="function">
    <text evidence="1">Subunit of the V1 complex of vacuolar(H+)-ATPase (V-ATPase), a multisubunit enzyme composed of a peripheral complex (V1) that hydrolyzes ATP and a membrane integral complex (V0) that translocates protons. V-ATPase is responsible for acidifying and maintaining the pH of intracellular compartments and in some cell types, is targeted to the plasma membrane, where it is responsible for acidifying the extracellular environment.</text>
</comment>
<comment type="subunit">
    <text evidence="1">V-ATPase is a heteromultimeric enzyme made up of two complexes: the ATP-hydrolytic V1 complex and the proton translocation V0 complex. The V1 complex consists of three catalytic AB heterodimers that form a heterohexamer, three peripheral stalks each consisting of EG heterodimers, one central rotor including subunits D and F, and the regulatory subunits C and H. The proton translocation complex V0 consists of the proton transport subunit a, a ring of proteolipid subunits c9c'', rotary subunit d, subunits e and f, and two accessory subunits.</text>
</comment>
<comment type="similarity">
    <text evidence="4">Belongs to the V-ATPase G subunit family.</text>
</comment>
<proteinExistence type="inferred from homology"/>
<evidence type="ECO:0000250" key="1">
    <source>
        <dbReference type="UniProtKB" id="O75348"/>
    </source>
</evidence>
<evidence type="ECO:0000255" key="2"/>
<evidence type="ECO:0000256" key="3">
    <source>
        <dbReference type="SAM" id="MobiDB-lite"/>
    </source>
</evidence>
<evidence type="ECO:0000305" key="4"/>
<dbReference type="EMBL" id="BC084318">
    <property type="protein sequence ID" value="AAH84318.1"/>
    <property type="molecule type" value="mRNA"/>
</dbReference>
<dbReference type="RefSeq" id="NP_001088408.1">
    <property type="nucleotide sequence ID" value="NM_001094939.1"/>
</dbReference>
<dbReference type="SMR" id="Q5XGW0"/>
<dbReference type="DNASU" id="495264"/>
<dbReference type="GeneID" id="495264"/>
<dbReference type="KEGG" id="xla:495264"/>
<dbReference type="AGR" id="Xenbase:XB-GENE-6254107"/>
<dbReference type="CTD" id="495264"/>
<dbReference type="Xenbase" id="XB-GENE-6254107">
    <property type="gene designation" value="atp6v1g3.L"/>
</dbReference>
<dbReference type="OMA" id="SYHRNME"/>
<dbReference type="OrthoDB" id="250802at2759"/>
<dbReference type="Proteomes" id="UP000186698">
    <property type="component" value="Chromosome 4L"/>
</dbReference>
<dbReference type="Bgee" id="495264">
    <property type="expression patterns" value="Expressed in kidney and 9 other cell types or tissues"/>
</dbReference>
<dbReference type="GO" id="GO:0030672">
    <property type="term" value="C:synaptic vesicle membrane"/>
    <property type="evidence" value="ECO:0000318"/>
    <property type="project" value="GO_Central"/>
</dbReference>
<dbReference type="GO" id="GO:0000221">
    <property type="term" value="C:vacuolar proton-transporting V-type ATPase, V1 domain"/>
    <property type="evidence" value="ECO:0000318"/>
    <property type="project" value="GO_Central"/>
</dbReference>
<dbReference type="GO" id="GO:0016887">
    <property type="term" value="F:ATP hydrolysis activity"/>
    <property type="evidence" value="ECO:0000318"/>
    <property type="project" value="GO_Central"/>
</dbReference>
<dbReference type="GO" id="GO:0046961">
    <property type="term" value="F:proton-transporting ATPase activity, rotational mechanism"/>
    <property type="evidence" value="ECO:0000318"/>
    <property type="project" value="GO_Central"/>
</dbReference>
<dbReference type="GO" id="GO:0097401">
    <property type="term" value="P:synaptic vesicle lumen acidification"/>
    <property type="evidence" value="ECO:0000318"/>
    <property type="project" value="GO_Central"/>
</dbReference>
<dbReference type="FunFam" id="1.20.5.2950:FF:000001">
    <property type="entry name" value="V-type proton ATPase subunit G"/>
    <property type="match status" value="1"/>
</dbReference>
<dbReference type="FunFam" id="1.20.5.620:FF:000004">
    <property type="entry name" value="V-type proton ATPase subunit G"/>
    <property type="match status" value="1"/>
</dbReference>
<dbReference type="Gene3D" id="1.20.5.2950">
    <property type="match status" value="1"/>
</dbReference>
<dbReference type="InterPro" id="IPR005124">
    <property type="entry name" value="V-ATPase_G"/>
</dbReference>
<dbReference type="NCBIfam" id="TIGR01147">
    <property type="entry name" value="V_ATP_synt_G"/>
    <property type="match status" value="1"/>
</dbReference>
<dbReference type="PANTHER" id="PTHR12713:SF5">
    <property type="entry name" value="V-TYPE PROTON ATPASE SUBUNIT G 3"/>
    <property type="match status" value="1"/>
</dbReference>
<dbReference type="PANTHER" id="PTHR12713">
    <property type="entry name" value="VACUOLAR ATP SYNTHASE SUBUNIT G"/>
    <property type="match status" value="1"/>
</dbReference>
<dbReference type="Pfam" id="PF03179">
    <property type="entry name" value="V-ATPase_G"/>
    <property type="match status" value="1"/>
</dbReference>
<protein>
    <recommendedName>
        <fullName>V-type proton ATPase subunit G 3</fullName>
        <shortName>V-ATPase subunit G 3</shortName>
    </recommendedName>
</protein>
<organism>
    <name type="scientific">Xenopus laevis</name>
    <name type="common">African clawed frog</name>
    <dbReference type="NCBI Taxonomy" id="8355"/>
    <lineage>
        <taxon>Eukaryota</taxon>
        <taxon>Metazoa</taxon>
        <taxon>Chordata</taxon>
        <taxon>Craniata</taxon>
        <taxon>Vertebrata</taxon>
        <taxon>Euteleostomi</taxon>
        <taxon>Amphibia</taxon>
        <taxon>Batrachia</taxon>
        <taxon>Anura</taxon>
        <taxon>Pipoidea</taxon>
        <taxon>Pipidae</taxon>
        <taxon>Xenopodinae</taxon>
        <taxon>Xenopus</taxon>
        <taxon>Xenopus</taxon>
    </lineage>
</organism>
<accession>Q5XGW0</accession>
<reference key="1">
    <citation type="submission" date="2004-10" db="EMBL/GenBank/DDBJ databases">
        <authorList>
            <consortium name="NIH - Xenopus Gene Collection (XGC) project"/>
        </authorList>
    </citation>
    <scope>NUCLEOTIDE SEQUENCE [LARGE SCALE MRNA]</scope>
    <source>
        <tissue>Kidney</tissue>
    </source>
</reference>
<name>VATG3_XENLA</name>
<keyword id="KW-0175">Coiled coil</keyword>
<keyword id="KW-0375">Hydrogen ion transport</keyword>
<keyword id="KW-0406">Ion transport</keyword>
<keyword id="KW-1185">Reference proteome</keyword>
<keyword id="KW-0813">Transport</keyword>
<gene>
    <name type="primary">atp6v1g3</name>
</gene>
<sequence>MASQSQGIQQLLQAEKRAKDKLEEAKKRKNKRLRQAKEEATADIDQYRLKREADFRRIQTSVMGSQGNLAVKIEEQTVEKIQFYSSSYNKYKEGVLKELLDLAYNIKPELHTNYKYKI</sequence>